<organism>
    <name type="scientific">Pongo pygmaeus</name>
    <name type="common">Bornean orangutan</name>
    <dbReference type="NCBI Taxonomy" id="9600"/>
    <lineage>
        <taxon>Eukaryota</taxon>
        <taxon>Metazoa</taxon>
        <taxon>Chordata</taxon>
        <taxon>Craniata</taxon>
        <taxon>Vertebrata</taxon>
        <taxon>Euteleostomi</taxon>
        <taxon>Mammalia</taxon>
        <taxon>Eutheria</taxon>
        <taxon>Euarchontoglires</taxon>
        <taxon>Primates</taxon>
        <taxon>Haplorrhini</taxon>
        <taxon>Catarrhini</taxon>
        <taxon>Hominidae</taxon>
        <taxon>Pongo</taxon>
    </lineage>
</organism>
<protein>
    <recommendedName>
        <fullName evidence="7">Complement C2</fullName>
    </recommendedName>
    <alternativeName>
        <fullName>C3/C5 convertase</fullName>
    </alternativeName>
    <component>
        <recommendedName>
            <fullName>Complement C2a</fullName>
        </recommendedName>
    </component>
    <component>
        <recommendedName>
            <fullName>Serine protease complement C2b</fullName>
            <ecNumber evidence="1">3.4.21.43</ecNumber>
        </recommendedName>
    </component>
</protein>
<name>CO2_PONPY</name>
<evidence type="ECO:0000250" key="1">
    <source>
        <dbReference type="UniProtKB" id="P06681"/>
    </source>
</evidence>
<evidence type="ECO:0000255" key="2"/>
<evidence type="ECO:0000255" key="3">
    <source>
        <dbReference type="PROSITE-ProRule" id="PRU00219"/>
    </source>
</evidence>
<evidence type="ECO:0000255" key="4">
    <source>
        <dbReference type="PROSITE-ProRule" id="PRU00274"/>
    </source>
</evidence>
<evidence type="ECO:0000255" key="5">
    <source>
        <dbReference type="PROSITE-ProRule" id="PRU00302"/>
    </source>
</evidence>
<evidence type="ECO:0000303" key="6">
    <source ref="1"/>
</evidence>
<evidence type="ECO:0000305" key="7"/>
<sequence>MGPLMVLFCLLFLYPGLADSAPSCPQNVNISGGTFTLSHGWAPGSLLTYSCPQGLYPSPASRLCKSSGQWQTPRATRSLSKAVCKPVRCPAPVSFENGIYTPRLGSYPVGGNVSFECEDGFILRGSPVRQCRPNGMWDGETAVCDNGAGHCPNPGISLGAVRTGFRFGHGDKVRYRCSSNLVLTGSSERECQGNGVWSGTEPICRQPYSYDFPEDVAPALGTSFSHMLGATNPTQKTKESLGRKIQIQRSGHLNLYLLLDCSQSVSENDFLIFKESASLMVDRIFSFEINVSVAIITFASEPKVLMSVLNDNSRDMTDVISSLENANYKDHENGTGTNTYAALNSVYLMMNNQMRLLGMETMAWQEIRHAIILLTDGKSNMGGSPKTAVDHIREILNINQKRNDYLDIYAIGVGKLDVDWRELNELGSKKDGERHAFILQDTKALHQVFEHMLDVSKLTDTICGVGNMSANASDQERTPWHVTIKPKSQETCRGALISDQWVLTAAHCFRDGNDHSLWRVNVGDPKSQWGKEFLIEKAVISPGFDVFAKKNQGILEFYGDDIALLKLAQKVKMSTHARPICLPCTMEANLALRRPQGSTCRDHENELLNKQSVPAHFVALNGSKLNINLKMGVEWTSCAEVVSQEKTMFPSLTDVREVVTDQFLCSGTQEDESPCKGESGGAVFLERRFRFFQVGLVSWGLYNPCLGSADKNSRKRAPRSKVPPPRDFHINLFRMQPWLRQHLGDVLNFLPL</sequence>
<gene>
    <name evidence="6" type="primary">C2</name>
</gene>
<reference key="1">
    <citation type="submission" date="2002-01" db="EMBL/GenBank/DDBJ databases">
        <title>Comparative analysis of human and primate complement C2 and factor B genes.</title>
        <authorList>
            <person name="Schneider P.M."/>
            <person name="Tantalaki E."/>
            <person name="Stradmann-Bellinghausen B."/>
            <person name="Rittner C."/>
        </authorList>
    </citation>
    <scope>NUCLEOTIDE SEQUENCE [GENOMIC DNA]</scope>
</reference>
<reference key="2">
    <citation type="submission" date="2004-11" db="EMBL/GenBank/DDBJ databases">
        <authorList>
            <consortium name="The German cDNA consortium"/>
        </authorList>
    </citation>
    <scope>NUCLEOTIDE SEQUENCE [LARGE SCALE MRNA]</scope>
    <source>
        <tissue>Kidney</tissue>
    </source>
</reference>
<proteinExistence type="evidence at transcript level"/>
<dbReference type="EC" id="3.4.21.43" evidence="1"/>
<dbReference type="EMBL" id="AY074690">
    <property type="protein sequence ID" value="AAL82820.1"/>
    <property type="molecule type" value="Genomic_DNA"/>
</dbReference>
<dbReference type="EMBL" id="AY074678">
    <property type="protein sequence ID" value="AAL82820.1"/>
    <property type="status" value="JOINED"/>
    <property type="molecule type" value="Genomic_DNA"/>
</dbReference>
<dbReference type="EMBL" id="AY074679">
    <property type="protein sequence ID" value="AAL82820.1"/>
    <property type="status" value="JOINED"/>
    <property type="molecule type" value="Genomic_DNA"/>
</dbReference>
<dbReference type="EMBL" id="AY074680">
    <property type="protein sequence ID" value="AAL82820.1"/>
    <property type="status" value="JOINED"/>
    <property type="molecule type" value="Genomic_DNA"/>
</dbReference>
<dbReference type="EMBL" id="AY074681">
    <property type="protein sequence ID" value="AAL82820.1"/>
    <property type="status" value="JOINED"/>
    <property type="molecule type" value="Genomic_DNA"/>
</dbReference>
<dbReference type="EMBL" id="AY074682">
    <property type="protein sequence ID" value="AAL82820.1"/>
    <property type="status" value="JOINED"/>
    <property type="molecule type" value="Genomic_DNA"/>
</dbReference>
<dbReference type="EMBL" id="AY074683">
    <property type="protein sequence ID" value="AAL82820.1"/>
    <property type="status" value="JOINED"/>
    <property type="molecule type" value="Genomic_DNA"/>
</dbReference>
<dbReference type="EMBL" id="AY074684">
    <property type="protein sequence ID" value="AAL82820.1"/>
    <property type="status" value="JOINED"/>
    <property type="molecule type" value="Genomic_DNA"/>
</dbReference>
<dbReference type="EMBL" id="AY074685">
    <property type="protein sequence ID" value="AAL82820.1"/>
    <property type="status" value="JOINED"/>
    <property type="molecule type" value="Genomic_DNA"/>
</dbReference>
<dbReference type="EMBL" id="AY074686">
    <property type="protein sequence ID" value="AAL82820.1"/>
    <property type="status" value="JOINED"/>
    <property type="molecule type" value="Genomic_DNA"/>
</dbReference>
<dbReference type="EMBL" id="AY074687">
    <property type="protein sequence ID" value="AAL82820.1"/>
    <property type="status" value="JOINED"/>
    <property type="molecule type" value="Genomic_DNA"/>
</dbReference>
<dbReference type="EMBL" id="AY074688">
    <property type="protein sequence ID" value="AAL82820.1"/>
    <property type="status" value="JOINED"/>
    <property type="molecule type" value="Genomic_DNA"/>
</dbReference>
<dbReference type="EMBL" id="AY074689">
    <property type="protein sequence ID" value="AAL82820.1"/>
    <property type="status" value="JOINED"/>
    <property type="molecule type" value="Genomic_DNA"/>
</dbReference>
<dbReference type="EMBL" id="CR859707">
    <property type="protein sequence ID" value="CAH91866.1"/>
    <property type="molecule type" value="mRNA"/>
</dbReference>
<dbReference type="SMR" id="Q8SQ75"/>
<dbReference type="MEROPS" id="S01.194"/>
<dbReference type="GlyCosmos" id="Q8SQ75">
    <property type="glycosylation" value="7 sites, No reported glycans"/>
</dbReference>
<dbReference type="KEGG" id="pon:100173033"/>
<dbReference type="GO" id="GO:0070062">
    <property type="term" value="C:extracellular exosome"/>
    <property type="evidence" value="ECO:0007669"/>
    <property type="project" value="TreeGrafter"/>
</dbReference>
<dbReference type="GO" id="GO:0046872">
    <property type="term" value="F:metal ion binding"/>
    <property type="evidence" value="ECO:0007669"/>
    <property type="project" value="UniProtKB-KW"/>
</dbReference>
<dbReference type="GO" id="GO:0004252">
    <property type="term" value="F:serine-type endopeptidase activity"/>
    <property type="evidence" value="ECO:0007669"/>
    <property type="project" value="UniProtKB-EC"/>
</dbReference>
<dbReference type="GO" id="GO:0006958">
    <property type="term" value="P:complement activation, classical pathway"/>
    <property type="evidence" value="ECO:0007669"/>
    <property type="project" value="UniProtKB-KW"/>
</dbReference>
<dbReference type="GO" id="GO:0045087">
    <property type="term" value="P:innate immune response"/>
    <property type="evidence" value="ECO:0007669"/>
    <property type="project" value="UniProtKB-KW"/>
</dbReference>
<dbReference type="GO" id="GO:0006508">
    <property type="term" value="P:proteolysis"/>
    <property type="evidence" value="ECO:0007669"/>
    <property type="project" value="UniProtKB-KW"/>
</dbReference>
<dbReference type="GO" id="GO:0009617">
    <property type="term" value="P:response to bacterium"/>
    <property type="evidence" value="ECO:0007669"/>
    <property type="project" value="TreeGrafter"/>
</dbReference>
<dbReference type="CDD" id="cd00033">
    <property type="entry name" value="CCP"/>
    <property type="match status" value="2"/>
</dbReference>
<dbReference type="CDD" id="cd00190">
    <property type="entry name" value="Tryp_SPc"/>
    <property type="match status" value="1"/>
</dbReference>
<dbReference type="CDD" id="cd01470">
    <property type="entry name" value="vWA_complement_factors"/>
    <property type="match status" value="1"/>
</dbReference>
<dbReference type="FunFam" id="3.40.50.410:FF:000065">
    <property type="entry name" value="Complement C2"/>
    <property type="match status" value="1"/>
</dbReference>
<dbReference type="FunFam" id="2.40.10.10:FF:000051">
    <property type="entry name" value="complement C2 isoform X1"/>
    <property type="match status" value="1"/>
</dbReference>
<dbReference type="FunFam" id="2.10.70.10:FF:000052">
    <property type="entry name" value="Complement factor B"/>
    <property type="match status" value="1"/>
</dbReference>
<dbReference type="FunFam" id="2.10.70.10:FF:000019">
    <property type="entry name" value="Complement factor b,-like"/>
    <property type="match status" value="2"/>
</dbReference>
<dbReference type="FunFam" id="2.40.10.10:FF:000046">
    <property type="entry name" value="Complement factor b,-like"/>
    <property type="match status" value="1"/>
</dbReference>
<dbReference type="Gene3D" id="2.10.70.10">
    <property type="entry name" value="Complement Module, domain 1"/>
    <property type="match status" value="3"/>
</dbReference>
<dbReference type="Gene3D" id="2.40.10.10">
    <property type="entry name" value="Trypsin-like serine proteases"/>
    <property type="match status" value="2"/>
</dbReference>
<dbReference type="Gene3D" id="3.40.50.410">
    <property type="entry name" value="von Willebrand factor, type A domain"/>
    <property type="match status" value="1"/>
</dbReference>
<dbReference type="InterPro" id="IPR011360">
    <property type="entry name" value="Compl_C2_B"/>
</dbReference>
<dbReference type="InterPro" id="IPR009003">
    <property type="entry name" value="Peptidase_S1_PA"/>
</dbReference>
<dbReference type="InterPro" id="IPR043504">
    <property type="entry name" value="Peptidase_S1_PA_chymotrypsin"/>
</dbReference>
<dbReference type="InterPro" id="IPR001314">
    <property type="entry name" value="Peptidase_S1A"/>
</dbReference>
<dbReference type="InterPro" id="IPR035976">
    <property type="entry name" value="Sushi/SCR/CCP_sf"/>
</dbReference>
<dbReference type="InterPro" id="IPR000436">
    <property type="entry name" value="Sushi_SCR_CCP_dom"/>
</dbReference>
<dbReference type="InterPro" id="IPR001254">
    <property type="entry name" value="Trypsin_dom"/>
</dbReference>
<dbReference type="InterPro" id="IPR018114">
    <property type="entry name" value="TRYPSIN_HIS"/>
</dbReference>
<dbReference type="InterPro" id="IPR033116">
    <property type="entry name" value="TRYPSIN_SER"/>
</dbReference>
<dbReference type="InterPro" id="IPR002035">
    <property type="entry name" value="VWF_A"/>
</dbReference>
<dbReference type="InterPro" id="IPR036465">
    <property type="entry name" value="vWFA_dom_sf"/>
</dbReference>
<dbReference type="PANTHER" id="PTHR46393:SF2">
    <property type="entry name" value="COMPLEMENT C2"/>
    <property type="match status" value="1"/>
</dbReference>
<dbReference type="PANTHER" id="PTHR46393">
    <property type="entry name" value="SUSHI DOMAIN-CONTAINING PROTEIN"/>
    <property type="match status" value="1"/>
</dbReference>
<dbReference type="Pfam" id="PF00084">
    <property type="entry name" value="Sushi"/>
    <property type="match status" value="2"/>
</dbReference>
<dbReference type="Pfam" id="PF00089">
    <property type="entry name" value="Trypsin"/>
    <property type="match status" value="1"/>
</dbReference>
<dbReference type="Pfam" id="PF00092">
    <property type="entry name" value="VWA"/>
    <property type="match status" value="1"/>
</dbReference>
<dbReference type="PIRSF" id="PIRSF001154">
    <property type="entry name" value="Compl_C2_B"/>
    <property type="match status" value="1"/>
</dbReference>
<dbReference type="PRINTS" id="PR00722">
    <property type="entry name" value="CHYMOTRYPSIN"/>
</dbReference>
<dbReference type="SMART" id="SM00032">
    <property type="entry name" value="CCP"/>
    <property type="match status" value="3"/>
</dbReference>
<dbReference type="SMART" id="SM00020">
    <property type="entry name" value="Tryp_SPc"/>
    <property type="match status" value="1"/>
</dbReference>
<dbReference type="SMART" id="SM00327">
    <property type="entry name" value="VWA"/>
    <property type="match status" value="1"/>
</dbReference>
<dbReference type="SUPFAM" id="SSF57535">
    <property type="entry name" value="Complement control module/SCR domain"/>
    <property type="match status" value="3"/>
</dbReference>
<dbReference type="SUPFAM" id="SSF50494">
    <property type="entry name" value="Trypsin-like serine proteases"/>
    <property type="match status" value="1"/>
</dbReference>
<dbReference type="SUPFAM" id="SSF53300">
    <property type="entry name" value="vWA-like"/>
    <property type="match status" value="1"/>
</dbReference>
<dbReference type="PROSITE" id="PS50923">
    <property type="entry name" value="SUSHI"/>
    <property type="match status" value="3"/>
</dbReference>
<dbReference type="PROSITE" id="PS50240">
    <property type="entry name" value="TRYPSIN_DOM"/>
    <property type="match status" value="1"/>
</dbReference>
<dbReference type="PROSITE" id="PS00134">
    <property type="entry name" value="TRYPSIN_HIS"/>
    <property type="match status" value="1"/>
</dbReference>
<dbReference type="PROSITE" id="PS00135">
    <property type="entry name" value="TRYPSIN_SER"/>
    <property type="match status" value="1"/>
</dbReference>
<dbReference type="PROSITE" id="PS50234">
    <property type="entry name" value="VWFA"/>
    <property type="match status" value="1"/>
</dbReference>
<comment type="function">
    <text evidence="1">Precursor of the catalytic component of the C3 and C5 convertase complexes, which are part of the complement pathway, a cascade of proteins that leads to phagocytosis and breakdown of pathogens and signaling that strengthens the adaptive immune system. Component C2 is part of the classical, lectin and GZMK complement systems.</text>
</comment>
<comment type="function">
    <molecule>Serine protease complement C2b</molecule>
    <text evidence="1">Catalytic component of the complement C3 and C5 convertase complexes. Following complement activation, recruited to the surface of pathogens by complement C4b opsonin to form the C3 convertase, or C3b and C4b opsonins to form the C5 convertase. As part of the C3 convertase, cleaves and activate C3 into C3a anaphylatoxin and C3b opsonin, the next components of the complement pathways. As part of the C5 convertase, cleaves and activate C5 into C5a anaphylatoxin and C5b component of the membrane attack complex.</text>
</comment>
<comment type="catalytic activity">
    <molecule>Serine protease complement C2b</molecule>
    <reaction evidence="1">
        <text>Selective cleavage of Arg-|-Ser bond in complement component C3 alpha-chain to form C3a and C3b, and Arg-|-Xaa bond in complement component C5 alpha-chain to form C5a and C5b.</text>
        <dbReference type="EC" id="3.4.21.43"/>
    </reaction>
</comment>
<comment type="cofactor">
    <cofactor evidence="1">
        <name>Mg(2+)</name>
        <dbReference type="ChEBI" id="CHEBI:18420"/>
    </cofactor>
    <cofactor evidence="1">
        <name>Mn(2+)</name>
        <dbReference type="ChEBI" id="CHEBI:29035"/>
    </cofactor>
</comment>
<comment type="subunit">
    <molecule>Serine protease complement C2b</molecule>
    <text evidence="1">Serine protease component of the C3 convertase, also named C4bC2b, composed of the serine protease complement C2b and complement C4b. Serine protease component of the C5 convertase, also named C4bC2bC3b, composed of the serine protease complement C2b, complement C3b, as well as complement C4b.</text>
</comment>
<comment type="subcellular location">
    <subcellularLocation>
        <location evidence="1">Secreted</location>
    </subcellularLocation>
    <subcellularLocation>
        <location evidence="1">Cell surface</location>
    </subcellularLocation>
    <text evidence="1">Recruited to the surface of pathogens by complement C3b and complement C4b opsonins.</text>
</comment>
<comment type="domain">
    <text evidence="1">The MIDAS-like motif in the VWFA domain binds divalent metal cations.</text>
</comment>
<comment type="PTM">
    <text evidence="1">Cleaved and activated by different proteases depending on the complement pathway to generate complement C2a and serine protease complement C2b chains. Cleaved and activated by C1S following activation by the classical complement system. Cleaved and activated by MASP2 following activation by the lectin complement system. Cleaved and activated by GZMK following activation by the GZMK complement system.</text>
</comment>
<comment type="similarity">
    <text evidence="4">Belongs to the peptidase S1 family.</text>
</comment>
<comment type="caution">
    <text evidence="7">Historically, the serine protease complement C2b, which constitutes the larger catalytic fragment, was named C2a. It was later renamed C2b, a nomenclature widely accepted now.</text>
</comment>
<accession>Q8SQ75</accession>
<accession>Q5R8P4</accession>
<keyword id="KW-0180">Complement pathway</keyword>
<keyword id="KW-1015">Disulfide bond</keyword>
<keyword id="KW-0325">Glycoprotein</keyword>
<keyword id="KW-0378">Hydrolase</keyword>
<keyword id="KW-0391">Immunity</keyword>
<keyword id="KW-0399">Innate immunity</keyword>
<keyword id="KW-0460">Magnesium</keyword>
<keyword id="KW-0464">Manganese</keyword>
<keyword id="KW-0479">Metal-binding</keyword>
<keyword id="KW-0645">Protease</keyword>
<keyword id="KW-0677">Repeat</keyword>
<keyword id="KW-0964">Secreted</keyword>
<keyword id="KW-0720">Serine protease</keyword>
<keyword id="KW-0732">Signal</keyword>
<keyword id="KW-0768">Sushi</keyword>
<feature type="signal peptide" evidence="1">
    <location>
        <begin position="1"/>
        <end position="20"/>
    </location>
</feature>
<feature type="chain" id="PRO_0000027619" description="Complement C2">
    <location>
        <begin position="21"/>
        <end position="752"/>
    </location>
</feature>
<feature type="chain" id="PRO_0000027620" description="Complement C2a" evidence="1">
    <location>
        <begin position="21"/>
        <end position="243"/>
    </location>
</feature>
<feature type="chain" id="PRO_0000027621" description="Serine protease complement C2b" evidence="1">
    <location>
        <begin position="244"/>
        <end position="752"/>
    </location>
</feature>
<feature type="domain" description="Sushi 1" evidence="5">
    <location>
        <begin position="22"/>
        <end position="86"/>
    </location>
</feature>
<feature type="domain" description="Sushi 2" evidence="5">
    <location>
        <begin position="87"/>
        <end position="146"/>
    </location>
</feature>
<feature type="domain" description="Sushi 3" evidence="5">
    <location>
        <begin position="149"/>
        <end position="206"/>
    </location>
</feature>
<feature type="domain" description="VWFA" evidence="3">
    <location>
        <begin position="254"/>
        <end position="452"/>
    </location>
</feature>
<feature type="domain" description="Peptidase S1" evidence="4">
    <location>
        <begin position="464"/>
        <end position="744"/>
    </location>
</feature>
<feature type="short sequence motif" description="MIDAS-like motif" evidence="1">
    <location>
        <begin position="260"/>
        <end position="264"/>
    </location>
</feature>
<feature type="active site" description="Charge relay system" evidence="1">
    <location>
        <position position="507"/>
    </location>
</feature>
<feature type="active site" description="Charge relay system" evidence="1">
    <location>
        <position position="561"/>
    </location>
</feature>
<feature type="active site" description="Charge relay system" evidence="1">
    <location>
        <position position="679"/>
    </location>
</feature>
<feature type="binding site" evidence="1">
    <location>
        <position position="262"/>
    </location>
    <ligand>
        <name>Mg(2+)</name>
        <dbReference type="ChEBI" id="CHEBI:18420"/>
    </ligand>
</feature>
<feature type="binding site" evidence="1">
    <location>
        <position position="264"/>
    </location>
    <ligand>
        <name>Mg(2+)</name>
        <dbReference type="ChEBI" id="CHEBI:18420"/>
    </ligand>
</feature>
<feature type="binding site" evidence="1">
    <location>
        <position position="337"/>
    </location>
    <ligand>
        <name>Mg(2+)</name>
        <dbReference type="ChEBI" id="CHEBI:18420"/>
    </ligand>
</feature>
<feature type="site" description="Cleavage; by C1S, MASP2 and GZMK" evidence="1">
    <location>
        <begin position="243"/>
        <end position="244"/>
    </location>
</feature>
<feature type="glycosylation site" description="N-linked (GlcNAc...) asparagine" evidence="2">
    <location>
        <position position="29"/>
    </location>
</feature>
<feature type="glycosylation site" description="N-linked (GlcNAc...) asparagine" evidence="2">
    <location>
        <position position="112"/>
    </location>
</feature>
<feature type="glycosylation site" description="N-linked (GlcNAc...) asparagine" evidence="2">
    <location>
        <position position="290"/>
    </location>
</feature>
<feature type="glycosylation site" description="N-linked (GlcNAc...) asparagine" evidence="2">
    <location>
        <position position="333"/>
    </location>
</feature>
<feature type="glycosylation site" description="N-linked (GlcNAc...) asparagine" evidence="2">
    <location>
        <position position="467"/>
    </location>
</feature>
<feature type="glycosylation site" description="N-linked (GlcNAc...) asparagine" evidence="2">
    <location>
        <position position="471"/>
    </location>
</feature>
<feature type="glycosylation site" description="N-linked (GlcNAc...) asparagine" evidence="2">
    <location>
        <position position="621"/>
    </location>
</feature>
<feature type="disulfide bond" evidence="1">
    <location>
        <begin position="24"/>
        <end position="64"/>
    </location>
</feature>
<feature type="disulfide bond" evidence="1">
    <location>
        <begin position="51"/>
        <end position="84"/>
    </location>
</feature>
<feature type="disulfide bond" evidence="1">
    <location>
        <begin position="89"/>
        <end position="131"/>
    </location>
</feature>
<feature type="disulfide bond" evidence="1">
    <location>
        <begin position="117"/>
        <end position="144"/>
    </location>
</feature>
<feature type="disulfide bond" evidence="1">
    <location>
        <begin position="151"/>
        <end position="191"/>
    </location>
</feature>
<feature type="disulfide bond" evidence="1">
    <location>
        <begin position="177"/>
        <end position="204"/>
    </location>
</feature>
<feature type="disulfide bond" evidence="1">
    <location>
        <begin position="463"/>
        <end position="581"/>
    </location>
</feature>
<feature type="disulfide bond" evidence="1">
    <location>
        <begin position="492"/>
        <end position="508"/>
    </location>
</feature>
<feature type="disulfide bond" evidence="1">
    <location>
        <begin position="584"/>
        <end position="600"/>
    </location>
</feature>
<feature type="disulfide bond" evidence="1">
    <location>
        <begin position="638"/>
        <end position="665"/>
    </location>
</feature>
<feature type="disulfide bond" evidence="1">
    <location>
        <begin position="675"/>
        <end position="705"/>
    </location>
</feature>
<feature type="sequence conflict" description="In Ref. 2; CAH91866." evidence="7" ref="2">
    <original>S</original>
    <variation>L</variation>
    <location>
        <position position="20"/>
    </location>
</feature>
<feature type="sequence conflict" description="In Ref. 2; CAH91866." evidence="7" ref="2">
    <original>F</original>
    <variation>S</variation>
    <location>
        <position position="165"/>
    </location>
</feature>
<feature type="sequence conflict" description="In Ref. 2; CAH91866." evidence="7" ref="2">
    <original>S</original>
    <variation>E</variation>
    <location>
        <position position="187"/>
    </location>
</feature>
<feature type="sequence conflict" description="In Ref. 2; CAH91866." evidence="7" ref="2">
    <original>MTD</original>
    <variation>ITE</variation>
    <location>
        <begin position="316"/>
        <end position="318"/>
    </location>
</feature>
<feature type="sequence conflict" description="In Ref. 2; CAH91866." evidence="7" ref="2">
    <original>I</original>
    <variation>L</variation>
    <location>
        <position position="395"/>
    </location>
</feature>
<feature type="sequence conflict" description="In Ref. 2; CAH91866." evidence="7" ref="2">
    <original>N</original>
    <variation>S</variation>
    <location>
        <position position="621"/>
    </location>
</feature>
<feature type="sequence conflict" description="In Ref. 2; CAH91866." evidence="7" ref="2">
    <original>K</original>
    <variation>E</variation>
    <location>
        <position position="721"/>
    </location>
</feature>